<proteinExistence type="predicted"/>
<dbReference type="EMBL" id="AE000512">
    <property type="protein sequence ID" value="AAD36065.1"/>
    <property type="molecule type" value="Genomic_DNA"/>
</dbReference>
<dbReference type="PIR" id="G72310">
    <property type="entry name" value="G72310"/>
</dbReference>
<dbReference type="RefSeq" id="NP_228794.1">
    <property type="nucleotide sequence ID" value="NC_000853.1"/>
</dbReference>
<dbReference type="RefSeq" id="WP_004080576.1">
    <property type="nucleotide sequence ID" value="NZ_CP011107.1"/>
</dbReference>
<dbReference type="SMR" id="Q9X081"/>
<dbReference type="STRING" id="243274.TM_0986"/>
<dbReference type="PaxDb" id="243274-THEMA_09420"/>
<dbReference type="EnsemblBacteria" id="AAD36065">
    <property type="protein sequence ID" value="AAD36065"/>
    <property type="gene ID" value="TM_0986"/>
</dbReference>
<dbReference type="KEGG" id="tma:TM0986"/>
<dbReference type="KEGG" id="tmi:THEMA_09420"/>
<dbReference type="KEGG" id="tmw:THMA_1008"/>
<dbReference type="PATRIC" id="fig|243274.18.peg.1829"/>
<dbReference type="eggNOG" id="COG3234">
    <property type="taxonomic scope" value="Bacteria"/>
</dbReference>
<dbReference type="InParanoid" id="Q9X081"/>
<dbReference type="OrthoDB" id="320761at2"/>
<dbReference type="Proteomes" id="UP000008183">
    <property type="component" value="Chromosome"/>
</dbReference>
<dbReference type="InterPro" id="IPR009558">
    <property type="entry name" value="DUF1175"/>
</dbReference>
<dbReference type="Pfam" id="PF06672">
    <property type="entry name" value="DUF1175"/>
    <property type="match status" value="1"/>
</dbReference>
<accession>Q9X081</accession>
<protein>
    <recommendedName>
        <fullName>Uncharacterized protein TM_0986</fullName>
    </recommendedName>
</protein>
<keyword id="KW-1185">Reference proteome</keyword>
<name>Y986_THEMA</name>
<evidence type="ECO:0000305" key="1"/>
<organism>
    <name type="scientific">Thermotoga maritima (strain ATCC 43589 / DSM 3109 / JCM 10099 / NBRC 100826 / MSB8)</name>
    <dbReference type="NCBI Taxonomy" id="243274"/>
    <lineage>
        <taxon>Bacteria</taxon>
        <taxon>Thermotogati</taxon>
        <taxon>Thermotogota</taxon>
        <taxon>Thermotogae</taxon>
        <taxon>Thermotogales</taxon>
        <taxon>Thermotogaceae</taxon>
        <taxon>Thermotoga</taxon>
    </lineage>
</organism>
<comment type="similarity">
    <text evidence="1">To E.coli YfaT and P.aeruginosa PA4490.</text>
</comment>
<reference key="1">
    <citation type="journal article" date="1999" name="Nature">
        <title>Evidence for lateral gene transfer between Archaea and Bacteria from genome sequence of Thermotoga maritima.</title>
        <authorList>
            <person name="Nelson K.E."/>
            <person name="Clayton R.A."/>
            <person name="Gill S.R."/>
            <person name="Gwinn M.L."/>
            <person name="Dodson R.J."/>
            <person name="Haft D.H."/>
            <person name="Hickey E.K."/>
            <person name="Peterson J.D."/>
            <person name="Nelson W.C."/>
            <person name="Ketchum K.A."/>
            <person name="McDonald L.A."/>
            <person name="Utterback T.R."/>
            <person name="Malek J.A."/>
            <person name="Linher K.D."/>
            <person name="Garrett M.M."/>
            <person name="Stewart A.M."/>
            <person name="Cotton M.D."/>
            <person name="Pratt M.S."/>
            <person name="Phillips C.A."/>
            <person name="Richardson D.L."/>
            <person name="Heidelberg J.F."/>
            <person name="Sutton G.G."/>
            <person name="Fleischmann R.D."/>
            <person name="Eisen J.A."/>
            <person name="White O."/>
            <person name="Salzberg S.L."/>
            <person name="Smith H.O."/>
            <person name="Venter J.C."/>
            <person name="Fraser C.M."/>
        </authorList>
    </citation>
    <scope>NUCLEOTIDE SEQUENCE [LARGE SCALE GENOMIC DNA]</scope>
    <source>
        <strain>ATCC 43589 / DSM 3109 / JCM 10099 / NBRC 100826 / MSB8</strain>
    </source>
</reference>
<sequence>MKRYLILLIVTGVLLWNVVEVLRFRVEFSGGTFVLKNVQDIFVPLEVRGAKVECSKNFVLEENGVLIKQVRPGETVTLHFESGGIFRVKKELKIEARASEEDSDGDGYPDSLELDSEDSERFRNWFVWIALSAFKNDPLLWPKEERDCSGFVRYCAREALKKHTGSWFSLSGYNGPVWEDVEKYNYPNLPLVGTKMFRIEKGAYRGVEDFSNFAVARILVECSMEFVTKSVSEALPGDIAVFFHPEDVEMPYHLMIFVGNLNLADHEGWFVYHTGPIGENPGELRFVRYSELVNYDPSWAPLEINPYFLGFYRFRFLK</sequence>
<gene>
    <name type="ordered locus">TM_0986</name>
</gene>
<feature type="chain" id="PRO_0000216217" description="Uncharacterized protein TM_0986">
    <location>
        <begin position="1"/>
        <end position="318"/>
    </location>
</feature>